<keyword id="KW-0687">Ribonucleoprotein</keyword>
<keyword id="KW-0689">Ribosomal protein</keyword>
<sequence>MRVNITLECTECGDRNYITTKNKRENPERIELKKYCPRLRRVTLHRETK</sequence>
<feature type="chain" id="PRO_0000170177" description="Large ribosomal subunit protein bL33A">
    <location>
        <begin position="1"/>
        <end position="49"/>
    </location>
</feature>
<comment type="similarity">
    <text evidence="2">Belongs to the bacterial ribosomal protein bL33 family.</text>
</comment>
<dbReference type="EMBL" id="AL596168">
    <property type="protein sequence ID" value="CAC96603.1"/>
    <property type="molecule type" value="Genomic_DNA"/>
</dbReference>
<dbReference type="PIR" id="AC1604">
    <property type="entry name" value="AC1604"/>
</dbReference>
<dbReference type="SMR" id="P66220"/>
<dbReference type="STRING" id="272626.gene:17565703"/>
<dbReference type="KEGG" id="lin:rpmG"/>
<dbReference type="eggNOG" id="COG0267">
    <property type="taxonomic scope" value="Bacteria"/>
</dbReference>
<dbReference type="HOGENOM" id="CLU_190949_0_2_9"/>
<dbReference type="OrthoDB" id="197660at2"/>
<dbReference type="Proteomes" id="UP000002513">
    <property type="component" value="Chromosome"/>
</dbReference>
<dbReference type="GO" id="GO:0005737">
    <property type="term" value="C:cytoplasm"/>
    <property type="evidence" value="ECO:0007669"/>
    <property type="project" value="UniProtKB-ARBA"/>
</dbReference>
<dbReference type="GO" id="GO:1990904">
    <property type="term" value="C:ribonucleoprotein complex"/>
    <property type="evidence" value="ECO:0007669"/>
    <property type="project" value="UniProtKB-KW"/>
</dbReference>
<dbReference type="GO" id="GO:0005840">
    <property type="term" value="C:ribosome"/>
    <property type="evidence" value="ECO:0007669"/>
    <property type="project" value="UniProtKB-KW"/>
</dbReference>
<dbReference type="GO" id="GO:0003735">
    <property type="term" value="F:structural constituent of ribosome"/>
    <property type="evidence" value="ECO:0007669"/>
    <property type="project" value="InterPro"/>
</dbReference>
<dbReference type="GO" id="GO:0006412">
    <property type="term" value="P:translation"/>
    <property type="evidence" value="ECO:0007669"/>
    <property type="project" value="UniProtKB-UniRule"/>
</dbReference>
<dbReference type="Gene3D" id="2.20.28.120">
    <property type="entry name" value="Ribosomal protein L33"/>
    <property type="match status" value="1"/>
</dbReference>
<dbReference type="HAMAP" id="MF_00294">
    <property type="entry name" value="Ribosomal_bL33"/>
    <property type="match status" value="1"/>
</dbReference>
<dbReference type="InterPro" id="IPR001705">
    <property type="entry name" value="Ribosomal_bL33"/>
</dbReference>
<dbReference type="InterPro" id="IPR018264">
    <property type="entry name" value="Ribosomal_bL33_CS"/>
</dbReference>
<dbReference type="InterPro" id="IPR038584">
    <property type="entry name" value="Ribosomal_bL33_sf"/>
</dbReference>
<dbReference type="InterPro" id="IPR011332">
    <property type="entry name" value="Ribosomal_zn-bd"/>
</dbReference>
<dbReference type="NCBIfam" id="NF001764">
    <property type="entry name" value="PRK00504.1"/>
    <property type="match status" value="1"/>
</dbReference>
<dbReference type="NCBIfam" id="NF001860">
    <property type="entry name" value="PRK00595.1"/>
    <property type="match status" value="1"/>
</dbReference>
<dbReference type="NCBIfam" id="TIGR01023">
    <property type="entry name" value="rpmG_bact"/>
    <property type="match status" value="1"/>
</dbReference>
<dbReference type="PANTHER" id="PTHR43168">
    <property type="entry name" value="50S RIBOSOMAL PROTEIN L33, CHLOROPLASTIC"/>
    <property type="match status" value="1"/>
</dbReference>
<dbReference type="PANTHER" id="PTHR43168:SF2">
    <property type="entry name" value="LARGE RIBOSOMAL SUBUNIT PROTEIN BL33C"/>
    <property type="match status" value="1"/>
</dbReference>
<dbReference type="Pfam" id="PF00471">
    <property type="entry name" value="Ribosomal_L33"/>
    <property type="match status" value="1"/>
</dbReference>
<dbReference type="SUPFAM" id="SSF57829">
    <property type="entry name" value="Zn-binding ribosomal proteins"/>
    <property type="match status" value="1"/>
</dbReference>
<dbReference type="PROSITE" id="PS00582">
    <property type="entry name" value="RIBOSOMAL_L33"/>
    <property type="match status" value="1"/>
</dbReference>
<reference key="1">
    <citation type="journal article" date="2001" name="Science">
        <title>Comparative genomics of Listeria species.</title>
        <authorList>
            <person name="Glaser P."/>
            <person name="Frangeul L."/>
            <person name="Buchrieser C."/>
            <person name="Rusniok C."/>
            <person name="Amend A."/>
            <person name="Baquero F."/>
            <person name="Berche P."/>
            <person name="Bloecker H."/>
            <person name="Brandt P."/>
            <person name="Chakraborty T."/>
            <person name="Charbit A."/>
            <person name="Chetouani F."/>
            <person name="Couve E."/>
            <person name="de Daruvar A."/>
            <person name="Dehoux P."/>
            <person name="Domann E."/>
            <person name="Dominguez-Bernal G."/>
            <person name="Duchaud E."/>
            <person name="Durant L."/>
            <person name="Dussurget O."/>
            <person name="Entian K.-D."/>
            <person name="Fsihi H."/>
            <person name="Garcia-del Portillo F."/>
            <person name="Garrido P."/>
            <person name="Gautier L."/>
            <person name="Goebel W."/>
            <person name="Gomez-Lopez N."/>
            <person name="Hain T."/>
            <person name="Hauf J."/>
            <person name="Jackson D."/>
            <person name="Jones L.-M."/>
            <person name="Kaerst U."/>
            <person name="Kreft J."/>
            <person name="Kuhn M."/>
            <person name="Kunst F."/>
            <person name="Kurapkat G."/>
            <person name="Madueno E."/>
            <person name="Maitournam A."/>
            <person name="Mata Vicente J."/>
            <person name="Ng E."/>
            <person name="Nedjari H."/>
            <person name="Nordsiek G."/>
            <person name="Novella S."/>
            <person name="de Pablos B."/>
            <person name="Perez-Diaz J.-C."/>
            <person name="Purcell R."/>
            <person name="Remmel B."/>
            <person name="Rose M."/>
            <person name="Schlueter T."/>
            <person name="Simoes N."/>
            <person name="Tierrez A."/>
            <person name="Vazquez-Boland J.-A."/>
            <person name="Voss H."/>
            <person name="Wehland J."/>
            <person name="Cossart P."/>
        </authorList>
    </citation>
    <scope>NUCLEOTIDE SEQUENCE [LARGE SCALE GENOMIC DNA]</scope>
    <source>
        <strain>ATCC BAA-680 / CLIP 11262</strain>
    </source>
</reference>
<organism>
    <name type="scientific">Listeria innocua serovar 6a (strain ATCC BAA-680 / CLIP 11262)</name>
    <dbReference type="NCBI Taxonomy" id="272626"/>
    <lineage>
        <taxon>Bacteria</taxon>
        <taxon>Bacillati</taxon>
        <taxon>Bacillota</taxon>
        <taxon>Bacilli</taxon>
        <taxon>Bacillales</taxon>
        <taxon>Listeriaceae</taxon>
        <taxon>Listeria</taxon>
    </lineage>
</organism>
<protein>
    <recommendedName>
        <fullName evidence="1">Large ribosomal subunit protein bL33A</fullName>
    </recommendedName>
    <alternativeName>
        <fullName>50S ribosomal protein L33 1</fullName>
    </alternativeName>
</protein>
<name>RL331_LISIN</name>
<gene>
    <name type="primary">rpmG1</name>
    <name type="ordered locus">lin1372</name>
</gene>
<proteinExistence type="inferred from homology"/>
<accession>P66220</accession>
<accession>Q92C19</accession>
<evidence type="ECO:0000255" key="1">
    <source>
        <dbReference type="HAMAP-Rule" id="MF_00294"/>
    </source>
</evidence>
<evidence type="ECO:0000305" key="2"/>